<proteinExistence type="evidence at protein level"/>
<organism>
    <name type="scientific">Mycobacterium tuberculosis (strain ATCC 25618 / H37Rv)</name>
    <dbReference type="NCBI Taxonomy" id="83332"/>
    <lineage>
        <taxon>Bacteria</taxon>
        <taxon>Bacillati</taxon>
        <taxon>Actinomycetota</taxon>
        <taxon>Actinomycetes</taxon>
        <taxon>Mycobacteriales</taxon>
        <taxon>Mycobacteriaceae</taxon>
        <taxon>Mycobacterium</taxon>
        <taxon>Mycobacterium tuberculosis complex</taxon>
    </lineage>
</organism>
<accession>P9WKL3</accession>
<accession>F2GMK4</accession>
<accession>L0T718</accession>
<accession>O06425</accession>
<accession>Q7D9M9</accession>
<comment type="induction">
    <text evidence="2 3">By salicylate. Part of the Rv0560c-Rv0559c operon. Operon induction is slow but is maintained for at least 2 weeks in aerobic culture in the presence of salicylate.</text>
</comment>
<sequence>MKGTKLAVVVGMTVAAVSLAAPAQADDYDAPFNNTIHRFGIYGPQDYNAWLAKISCERLSRGVDGDAYKSATFLQRNLPRGTTQGQAFQFLGAAIDHYCPEHVGVLQRAGTR</sequence>
<dbReference type="EMBL" id="AL123456">
    <property type="protein sequence ID" value="CCP43297.1"/>
    <property type="molecule type" value="Genomic_DNA"/>
</dbReference>
<dbReference type="PIR" id="B70549">
    <property type="entry name" value="B70549"/>
</dbReference>
<dbReference type="RefSeq" id="NP_215073.1">
    <property type="nucleotide sequence ID" value="NC_000962.3"/>
</dbReference>
<dbReference type="RefSeq" id="WP_003402937.1">
    <property type="nucleotide sequence ID" value="NZ_NVQJ01000036.1"/>
</dbReference>
<dbReference type="STRING" id="83332.Rv0559c"/>
<dbReference type="PaxDb" id="83332-Rv0559c"/>
<dbReference type="DNASU" id="887569"/>
<dbReference type="GeneID" id="887569"/>
<dbReference type="KEGG" id="mtu:Rv0559c"/>
<dbReference type="KEGG" id="mtv:RVBD_0559c"/>
<dbReference type="TubercuList" id="Rv0559c"/>
<dbReference type="eggNOG" id="ENOG5030R22">
    <property type="taxonomic scope" value="Bacteria"/>
</dbReference>
<dbReference type="InParanoid" id="P9WKL3"/>
<dbReference type="OrthoDB" id="4640123at2"/>
<dbReference type="Proteomes" id="UP000001584">
    <property type="component" value="Chromosome"/>
</dbReference>
<dbReference type="GO" id="GO:0005576">
    <property type="term" value="C:extracellular region"/>
    <property type="evidence" value="ECO:0007005"/>
    <property type="project" value="MTBBASE"/>
</dbReference>
<dbReference type="GO" id="GO:0009274">
    <property type="term" value="C:peptidoglycan-based cell wall"/>
    <property type="evidence" value="ECO:0007005"/>
    <property type="project" value="MTBBASE"/>
</dbReference>
<dbReference type="InterPro" id="IPR007969">
    <property type="entry name" value="DUF732"/>
</dbReference>
<dbReference type="Pfam" id="PF05305">
    <property type="entry name" value="DUF732"/>
    <property type="match status" value="1"/>
</dbReference>
<protein>
    <recommendedName>
        <fullName>Uncharacterized protein Rv0559c</fullName>
    </recommendedName>
</protein>
<reference key="1">
    <citation type="journal article" date="1998" name="Nature">
        <title>Deciphering the biology of Mycobacterium tuberculosis from the complete genome sequence.</title>
        <authorList>
            <person name="Cole S.T."/>
            <person name="Brosch R."/>
            <person name="Parkhill J."/>
            <person name="Garnier T."/>
            <person name="Churcher C.M."/>
            <person name="Harris D.E."/>
            <person name="Gordon S.V."/>
            <person name="Eiglmeier K."/>
            <person name="Gas S."/>
            <person name="Barry C.E. III"/>
            <person name="Tekaia F."/>
            <person name="Badcock K."/>
            <person name="Basham D."/>
            <person name="Brown D."/>
            <person name="Chillingworth T."/>
            <person name="Connor R."/>
            <person name="Davies R.M."/>
            <person name="Devlin K."/>
            <person name="Feltwell T."/>
            <person name="Gentles S."/>
            <person name="Hamlin N."/>
            <person name="Holroyd S."/>
            <person name="Hornsby T."/>
            <person name="Jagels K."/>
            <person name="Krogh A."/>
            <person name="McLean J."/>
            <person name="Moule S."/>
            <person name="Murphy L.D."/>
            <person name="Oliver S."/>
            <person name="Osborne J."/>
            <person name="Quail M.A."/>
            <person name="Rajandream M.A."/>
            <person name="Rogers J."/>
            <person name="Rutter S."/>
            <person name="Seeger K."/>
            <person name="Skelton S."/>
            <person name="Squares S."/>
            <person name="Squares R."/>
            <person name="Sulston J.E."/>
            <person name="Taylor K."/>
            <person name="Whitehead S."/>
            <person name="Barrell B.G."/>
        </authorList>
    </citation>
    <scope>NUCLEOTIDE SEQUENCE [LARGE SCALE GENOMIC DNA]</scope>
    <source>
        <strain>ATCC 25618 / H37Rv</strain>
    </source>
</reference>
<reference key="2">
    <citation type="journal article" date="2005" name="Arch. Microbiol.">
        <title>Gene expression profiling analysis of Mycobacterium tuberculosis genes in response to salicylate.</title>
        <authorList>
            <person name="Denkin S."/>
            <person name="Byrne S."/>
            <person name="Jie C."/>
            <person name="Zhang Y."/>
        </authorList>
    </citation>
    <scope>INDUCTION BY SALICYLATE</scope>
    <scope>OPERON STRUCTURE</scope>
    <source>
        <strain>ATCC 25618 / H37Rv</strain>
    </source>
</reference>
<reference key="3">
    <citation type="journal article" date="2011" name="Mol. Cell. Proteomics">
        <title>Proteogenomic analysis of Mycobacterium tuberculosis by high resolution mass spectrometry.</title>
        <authorList>
            <person name="Kelkar D.S."/>
            <person name="Kumar D."/>
            <person name="Kumar P."/>
            <person name="Balakrishnan L."/>
            <person name="Muthusamy B."/>
            <person name="Yadav A.K."/>
            <person name="Shrivastava P."/>
            <person name="Marimuthu A."/>
            <person name="Anand S."/>
            <person name="Sundaram H."/>
            <person name="Kingsbury R."/>
            <person name="Harsha H.C."/>
            <person name="Nair B."/>
            <person name="Prasad T.S."/>
            <person name="Chauhan D.S."/>
            <person name="Katoch K."/>
            <person name="Katoch V.M."/>
            <person name="Kumar P."/>
            <person name="Chaerkady R."/>
            <person name="Ramachandran S."/>
            <person name="Dash D."/>
            <person name="Pandey A."/>
        </authorList>
    </citation>
    <scope>IDENTIFICATION BY MASS SPECTROMETRY [LARGE SCALE ANALYSIS]</scope>
    <source>
        <strain>ATCC 25618 / H37Rv</strain>
    </source>
</reference>
<reference key="4">
    <citation type="journal article" date="2012" name="PLoS ONE">
        <title>The promoter of Rv0560c is induced by salicylate and structurally-related compounds in Mycobacterium tuberculosis.</title>
        <authorList>
            <person name="Schuessler D.L."/>
            <person name="Parish T."/>
        </authorList>
    </citation>
    <scope>INDUCTION</scope>
    <source>
        <strain>ATCC 25618 / H37Rv</strain>
    </source>
</reference>
<evidence type="ECO:0000255" key="1"/>
<evidence type="ECO:0000269" key="2">
    <source>
    </source>
</evidence>
<evidence type="ECO:0000269" key="3">
    <source>
    </source>
</evidence>
<gene>
    <name type="ordered locus">Rv0559c</name>
</gene>
<feature type="signal peptide" evidence="1">
    <location>
        <begin position="1"/>
        <end position="25"/>
    </location>
</feature>
<feature type="chain" id="PRO_0000419778" description="Uncharacterized protein Rv0559c">
    <location>
        <begin position="26"/>
        <end position="112"/>
    </location>
</feature>
<name>Y559_MYCTU</name>
<keyword id="KW-1185">Reference proteome</keyword>
<keyword id="KW-0732">Signal</keyword>